<evidence type="ECO:0000255" key="1">
    <source>
        <dbReference type="HAMAP-Rule" id="MF_01343"/>
    </source>
</evidence>
<evidence type="ECO:0000305" key="2"/>
<gene>
    <name evidence="1" type="primary">rpsO</name>
    <name type="ordered locus">Csal_3071</name>
</gene>
<dbReference type="EMBL" id="CP000285">
    <property type="protein sequence ID" value="ABE60415.1"/>
    <property type="molecule type" value="Genomic_DNA"/>
</dbReference>
<dbReference type="RefSeq" id="WP_011508361.1">
    <property type="nucleotide sequence ID" value="NC_007963.1"/>
</dbReference>
<dbReference type="SMR" id="Q1QSZ3"/>
<dbReference type="STRING" id="290398.Csal_3071"/>
<dbReference type="GeneID" id="95335765"/>
<dbReference type="KEGG" id="csa:Csal_3071"/>
<dbReference type="eggNOG" id="COG0184">
    <property type="taxonomic scope" value="Bacteria"/>
</dbReference>
<dbReference type="HOGENOM" id="CLU_148518_0_0_6"/>
<dbReference type="OrthoDB" id="9799262at2"/>
<dbReference type="Proteomes" id="UP000000239">
    <property type="component" value="Chromosome"/>
</dbReference>
<dbReference type="GO" id="GO:0022627">
    <property type="term" value="C:cytosolic small ribosomal subunit"/>
    <property type="evidence" value="ECO:0007669"/>
    <property type="project" value="TreeGrafter"/>
</dbReference>
<dbReference type="GO" id="GO:0019843">
    <property type="term" value="F:rRNA binding"/>
    <property type="evidence" value="ECO:0007669"/>
    <property type="project" value="UniProtKB-UniRule"/>
</dbReference>
<dbReference type="GO" id="GO:0003735">
    <property type="term" value="F:structural constituent of ribosome"/>
    <property type="evidence" value="ECO:0007669"/>
    <property type="project" value="InterPro"/>
</dbReference>
<dbReference type="GO" id="GO:0006412">
    <property type="term" value="P:translation"/>
    <property type="evidence" value="ECO:0007669"/>
    <property type="project" value="UniProtKB-UniRule"/>
</dbReference>
<dbReference type="CDD" id="cd00353">
    <property type="entry name" value="Ribosomal_S15p_S13e"/>
    <property type="match status" value="1"/>
</dbReference>
<dbReference type="FunFam" id="1.10.287.10:FF:000002">
    <property type="entry name" value="30S ribosomal protein S15"/>
    <property type="match status" value="1"/>
</dbReference>
<dbReference type="Gene3D" id="6.10.250.3130">
    <property type="match status" value="1"/>
</dbReference>
<dbReference type="Gene3D" id="1.10.287.10">
    <property type="entry name" value="S15/NS1, RNA-binding"/>
    <property type="match status" value="1"/>
</dbReference>
<dbReference type="HAMAP" id="MF_01343_B">
    <property type="entry name" value="Ribosomal_uS15_B"/>
    <property type="match status" value="1"/>
</dbReference>
<dbReference type="InterPro" id="IPR000589">
    <property type="entry name" value="Ribosomal_uS15"/>
</dbReference>
<dbReference type="InterPro" id="IPR005290">
    <property type="entry name" value="Ribosomal_uS15_bac-type"/>
</dbReference>
<dbReference type="InterPro" id="IPR009068">
    <property type="entry name" value="uS15_NS1_RNA-bd_sf"/>
</dbReference>
<dbReference type="NCBIfam" id="TIGR00952">
    <property type="entry name" value="S15_bact"/>
    <property type="match status" value="1"/>
</dbReference>
<dbReference type="PANTHER" id="PTHR23321">
    <property type="entry name" value="RIBOSOMAL PROTEIN S15, BACTERIAL AND ORGANELLAR"/>
    <property type="match status" value="1"/>
</dbReference>
<dbReference type="PANTHER" id="PTHR23321:SF26">
    <property type="entry name" value="SMALL RIBOSOMAL SUBUNIT PROTEIN US15M"/>
    <property type="match status" value="1"/>
</dbReference>
<dbReference type="Pfam" id="PF00312">
    <property type="entry name" value="Ribosomal_S15"/>
    <property type="match status" value="1"/>
</dbReference>
<dbReference type="SMART" id="SM01387">
    <property type="entry name" value="Ribosomal_S15"/>
    <property type="match status" value="1"/>
</dbReference>
<dbReference type="SUPFAM" id="SSF47060">
    <property type="entry name" value="S15/NS1 RNA-binding domain"/>
    <property type="match status" value="1"/>
</dbReference>
<dbReference type="PROSITE" id="PS00362">
    <property type="entry name" value="RIBOSOMAL_S15"/>
    <property type="match status" value="1"/>
</dbReference>
<feature type="chain" id="PRO_0000255488" description="Small ribosomal subunit protein uS15">
    <location>
        <begin position="1"/>
        <end position="89"/>
    </location>
</feature>
<keyword id="KW-1185">Reference proteome</keyword>
<keyword id="KW-0687">Ribonucleoprotein</keyword>
<keyword id="KW-0689">Ribosomal protein</keyword>
<keyword id="KW-0694">RNA-binding</keyword>
<keyword id="KW-0699">rRNA-binding</keyword>
<sequence length="89" mass="10394">MALTAEQKATIVNEYGRGENDTGSPEVQVALLSANIDGLQDHFKSNKQDHHSRRGLIRMVNQRRKLLDYLKRKDFERYQSLIQRLGLRR</sequence>
<organism>
    <name type="scientific">Chromohalobacter salexigens (strain ATCC BAA-138 / DSM 3043 / CIP 106854 / NCIMB 13768 / 1H11)</name>
    <dbReference type="NCBI Taxonomy" id="290398"/>
    <lineage>
        <taxon>Bacteria</taxon>
        <taxon>Pseudomonadati</taxon>
        <taxon>Pseudomonadota</taxon>
        <taxon>Gammaproteobacteria</taxon>
        <taxon>Oceanospirillales</taxon>
        <taxon>Halomonadaceae</taxon>
        <taxon>Chromohalobacter</taxon>
    </lineage>
</organism>
<accession>Q1QSZ3</accession>
<protein>
    <recommendedName>
        <fullName evidence="1">Small ribosomal subunit protein uS15</fullName>
    </recommendedName>
    <alternativeName>
        <fullName evidence="2">30S ribosomal protein S15</fullName>
    </alternativeName>
</protein>
<name>RS15_CHRSD</name>
<proteinExistence type="inferred from homology"/>
<reference key="1">
    <citation type="journal article" date="2011" name="Stand. Genomic Sci.">
        <title>Complete genome sequence of the halophilic and highly halotolerant Chromohalobacter salexigens type strain (1H11(T)).</title>
        <authorList>
            <person name="Copeland A."/>
            <person name="O'Connor K."/>
            <person name="Lucas S."/>
            <person name="Lapidus A."/>
            <person name="Berry K.W."/>
            <person name="Detter J.C."/>
            <person name="Del Rio T.G."/>
            <person name="Hammon N."/>
            <person name="Dalin E."/>
            <person name="Tice H."/>
            <person name="Pitluck S."/>
            <person name="Bruce D."/>
            <person name="Goodwin L."/>
            <person name="Han C."/>
            <person name="Tapia R."/>
            <person name="Saunders E."/>
            <person name="Schmutz J."/>
            <person name="Brettin T."/>
            <person name="Larimer F."/>
            <person name="Land M."/>
            <person name="Hauser L."/>
            <person name="Vargas C."/>
            <person name="Nieto J.J."/>
            <person name="Kyrpides N.C."/>
            <person name="Ivanova N."/>
            <person name="Goker M."/>
            <person name="Klenk H.P."/>
            <person name="Csonka L.N."/>
            <person name="Woyke T."/>
        </authorList>
    </citation>
    <scope>NUCLEOTIDE SEQUENCE [LARGE SCALE GENOMIC DNA]</scope>
    <source>
        <strain>ATCC BAA-138 / DSM 3043 / CIP 106854 / NCIMB 13768 / 1H11</strain>
    </source>
</reference>
<comment type="function">
    <text evidence="1">One of the primary rRNA binding proteins, it binds directly to 16S rRNA where it helps nucleate assembly of the platform of the 30S subunit by binding and bridging several RNA helices of the 16S rRNA.</text>
</comment>
<comment type="function">
    <text evidence="1">Forms an intersubunit bridge (bridge B4) with the 23S rRNA of the 50S subunit in the ribosome.</text>
</comment>
<comment type="subunit">
    <text evidence="1">Part of the 30S ribosomal subunit. Forms a bridge to the 50S subunit in the 70S ribosome, contacting the 23S rRNA.</text>
</comment>
<comment type="similarity">
    <text evidence="1">Belongs to the universal ribosomal protein uS15 family.</text>
</comment>